<protein>
    <recommendedName>
        <fullName evidence="1">Galactokinase</fullName>
        <ecNumber evidence="1">2.7.1.6</ecNumber>
    </recommendedName>
    <alternativeName>
        <fullName evidence="1">Galactose kinase</fullName>
    </alternativeName>
</protein>
<feature type="chain" id="PRO_1000005754" description="Galactokinase">
    <location>
        <begin position="1"/>
        <end position="387"/>
    </location>
</feature>
<feature type="active site" description="Proton acceptor" evidence="1">
    <location>
        <position position="174"/>
    </location>
</feature>
<feature type="binding site" evidence="1">
    <location>
        <begin position="33"/>
        <end position="36"/>
    </location>
    <ligand>
        <name>substrate</name>
    </ligand>
</feature>
<feature type="binding site" evidence="1">
    <location>
        <position position="67"/>
    </location>
    <ligand>
        <name>ATP</name>
        <dbReference type="ChEBI" id="CHEBI:30616"/>
    </ligand>
</feature>
<feature type="binding site" evidence="1">
    <location>
        <begin position="124"/>
        <end position="130"/>
    </location>
    <ligand>
        <name>ATP</name>
        <dbReference type="ChEBI" id="CHEBI:30616"/>
    </ligand>
</feature>
<feature type="binding site" evidence="1">
    <location>
        <position position="130"/>
    </location>
    <ligand>
        <name>Mg(2+)</name>
        <dbReference type="ChEBI" id="CHEBI:18420"/>
    </ligand>
</feature>
<feature type="binding site" evidence="1">
    <location>
        <position position="162"/>
    </location>
    <ligand>
        <name>Mg(2+)</name>
        <dbReference type="ChEBI" id="CHEBI:18420"/>
    </ligand>
</feature>
<feature type="binding site" evidence="1">
    <location>
        <position position="224"/>
    </location>
    <ligand>
        <name>substrate</name>
    </ligand>
</feature>
<feature type="site" description="Transition state stabilizer" evidence="1">
    <location>
        <position position="27"/>
    </location>
</feature>
<gene>
    <name evidence="1" type="primary">galK</name>
    <name type="ordered locus">LVIS_1904</name>
</gene>
<reference key="1">
    <citation type="journal article" date="2006" name="Proc. Natl. Acad. Sci. U.S.A.">
        <title>Comparative genomics of the lactic acid bacteria.</title>
        <authorList>
            <person name="Makarova K.S."/>
            <person name="Slesarev A."/>
            <person name="Wolf Y.I."/>
            <person name="Sorokin A."/>
            <person name="Mirkin B."/>
            <person name="Koonin E.V."/>
            <person name="Pavlov A."/>
            <person name="Pavlova N."/>
            <person name="Karamychev V."/>
            <person name="Polouchine N."/>
            <person name="Shakhova V."/>
            <person name="Grigoriev I."/>
            <person name="Lou Y."/>
            <person name="Rohksar D."/>
            <person name="Lucas S."/>
            <person name="Huang K."/>
            <person name="Goodstein D.M."/>
            <person name="Hawkins T."/>
            <person name="Plengvidhya V."/>
            <person name="Welker D."/>
            <person name="Hughes J."/>
            <person name="Goh Y."/>
            <person name="Benson A."/>
            <person name="Baldwin K."/>
            <person name="Lee J.-H."/>
            <person name="Diaz-Muniz I."/>
            <person name="Dosti B."/>
            <person name="Smeianov V."/>
            <person name="Wechter W."/>
            <person name="Barabote R."/>
            <person name="Lorca G."/>
            <person name="Altermann E."/>
            <person name="Barrangou R."/>
            <person name="Ganesan B."/>
            <person name="Xie Y."/>
            <person name="Rawsthorne H."/>
            <person name="Tamir D."/>
            <person name="Parker C."/>
            <person name="Breidt F."/>
            <person name="Broadbent J.R."/>
            <person name="Hutkins R."/>
            <person name="O'Sullivan D."/>
            <person name="Steele J."/>
            <person name="Unlu G."/>
            <person name="Saier M.H. Jr."/>
            <person name="Klaenhammer T."/>
            <person name="Richardson P."/>
            <person name="Kozyavkin S."/>
            <person name="Weimer B.C."/>
            <person name="Mills D.A."/>
        </authorList>
    </citation>
    <scope>NUCLEOTIDE SEQUENCE [LARGE SCALE GENOMIC DNA]</scope>
    <source>
        <strain>ATCC 367 / BCRC 12310 / CIP 105137 / JCM 1170 / LMG 11437 / NCIMB 947 / NCTC 947</strain>
    </source>
</reference>
<sequence>MDFASLATEYQEKFDVAPQRVFFSPGRINLIGEYTDFNGGHVFPAAISMGTYAAYSARDDKQFRVYSANVPDAGVLTFSLDNLAFDKADNWANYLKGMLFELAKQDLTIDHGFDLFVHGNLPDASGLSSSASMEMLMGEILHAAYGMKLDEVEMVKVGQQVENDYFGLNTGIMDQFAIGMGKKDQAILLDTNTMDYEYAPLALGDYVVVIMNTKKRRELTDSKYNERRAQCEEALRRLQTKLDIKTLGDLNEDEFDENAYLINDDVLIKRARHAVFENQRTLKAFDALQKNDLQRFGHLVNASHISLNYDFAVTGKELDTLVETAWQQPGVLGARMTGAGFGGCAIAIVKKDNVADFEAQVGKTYEDTIGHPAEFYVAEIADGPAEL</sequence>
<comment type="function">
    <text evidence="1">Catalyzes the transfer of the gamma-phosphate of ATP to D-galactose to form alpha-D-galactose-1-phosphate (Gal-1-P).</text>
</comment>
<comment type="catalytic activity">
    <reaction evidence="1">
        <text>alpha-D-galactose + ATP = alpha-D-galactose 1-phosphate + ADP + H(+)</text>
        <dbReference type="Rhea" id="RHEA:13553"/>
        <dbReference type="ChEBI" id="CHEBI:15378"/>
        <dbReference type="ChEBI" id="CHEBI:28061"/>
        <dbReference type="ChEBI" id="CHEBI:30616"/>
        <dbReference type="ChEBI" id="CHEBI:58336"/>
        <dbReference type="ChEBI" id="CHEBI:456216"/>
        <dbReference type="EC" id="2.7.1.6"/>
    </reaction>
</comment>
<comment type="pathway">
    <text evidence="1">Carbohydrate metabolism; galactose metabolism.</text>
</comment>
<comment type="subcellular location">
    <subcellularLocation>
        <location evidence="1">Cytoplasm</location>
    </subcellularLocation>
</comment>
<comment type="similarity">
    <text evidence="1">Belongs to the GHMP kinase family. GalK subfamily.</text>
</comment>
<proteinExistence type="inferred from homology"/>
<dbReference type="EC" id="2.7.1.6" evidence="1"/>
<dbReference type="EMBL" id="CP000416">
    <property type="protein sequence ID" value="ABJ64964.1"/>
    <property type="molecule type" value="Genomic_DNA"/>
</dbReference>
<dbReference type="RefSeq" id="WP_011668585.1">
    <property type="nucleotide sequence ID" value="NC_008497.1"/>
</dbReference>
<dbReference type="SMR" id="Q03PA8"/>
<dbReference type="STRING" id="387344.LVIS_1904"/>
<dbReference type="KEGG" id="lbr:LVIS_1904"/>
<dbReference type="eggNOG" id="COG0153">
    <property type="taxonomic scope" value="Bacteria"/>
</dbReference>
<dbReference type="HOGENOM" id="CLU_017814_2_1_9"/>
<dbReference type="UniPathway" id="UPA00214"/>
<dbReference type="Proteomes" id="UP000001652">
    <property type="component" value="Chromosome"/>
</dbReference>
<dbReference type="GO" id="GO:0005829">
    <property type="term" value="C:cytosol"/>
    <property type="evidence" value="ECO:0007669"/>
    <property type="project" value="TreeGrafter"/>
</dbReference>
<dbReference type="GO" id="GO:0005524">
    <property type="term" value="F:ATP binding"/>
    <property type="evidence" value="ECO:0007669"/>
    <property type="project" value="UniProtKB-UniRule"/>
</dbReference>
<dbReference type="GO" id="GO:0004335">
    <property type="term" value="F:galactokinase activity"/>
    <property type="evidence" value="ECO:0007669"/>
    <property type="project" value="UniProtKB-UniRule"/>
</dbReference>
<dbReference type="GO" id="GO:0000287">
    <property type="term" value="F:magnesium ion binding"/>
    <property type="evidence" value="ECO:0007669"/>
    <property type="project" value="UniProtKB-UniRule"/>
</dbReference>
<dbReference type="GO" id="GO:0006012">
    <property type="term" value="P:galactose metabolic process"/>
    <property type="evidence" value="ECO:0007669"/>
    <property type="project" value="UniProtKB-UniRule"/>
</dbReference>
<dbReference type="FunFam" id="3.30.230.10:FF:000017">
    <property type="entry name" value="Galactokinase"/>
    <property type="match status" value="1"/>
</dbReference>
<dbReference type="FunFam" id="3.30.70.890:FF:000001">
    <property type="entry name" value="Galactokinase"/>
    <property type="match status" value="1"/>
</dbReference>
<dbReference type="Gene3D" id="3.30.230.10">
    <property type="match status" value="1"/>
</dbReference>
<dbReference type="Gene3D" id="3.30.70.890">
    <property type="entry name" value="GHMP kinase, C-terminal domain"/>
    <property type="match status" value="1"/>
</dbReference>
<dbReference type="HAMAP" id="MF_00246">
    <property type="entry name" value="Galactokinase"/>
    <property type="match status" value="1"/>
</dbReference>
<dbReference type="InterPro" id="IPR000705">
    <property type="entry name" value="Galactokinase"/>
</dbReference>
<dbReference type="InterPro" id="IPR022963">
    <property type="entry name" value="Galactokinase_bac"/>
</dbReference>
<dbReference type="InterPro" id="IPR019539">
    <property type="entry name" value="GalKase_N"/>
</dbReference>
<dbReference type="InterPro" id="IPR013750">
    <property type="entry name" value="GHMP_kinase_C_dom"/>
</dbReference>
<dbReference type="InterPro" id="IPR036554">
    <property type="entry name" value="GHMP_kinase_C_sf"/>
</dbReference>
<dbReference type="InterPro" id="IPR006204">
    <property type="entry name" value="GHMP_kinase_N_dom"/>
</dbReference>
<dbReference type="InterPro" id="IPR006203">
    <property type="entry name" value="GHMP_knse_ATP-bd_CS"/>
</dbReference>
<dbReference type="InterPro" id="IPR006206">
    <property type="entry name" value="Mevalonate/galactokinase"/>
</dbReference>
<dbReference type="InterPro" id="IPR020568">
    <property type="entry name" value="Ribosomal_Su5_D2-typ_SF"/>
</dbReference>
<dbReference type="InterPro" id="IPR014721">
    <property type="entry name" value="Ribsml_uS5_D2-typ_fold_subgr"/>
</dbReference>
<dbReference type="NCBIfam" id="TIGR00131">
    <property type="entry name" value="gal_kin"/>
    <property type="match status" value="1"/>
</dbReference>
<dbReference type="NCBIfam" id="NF003705">
    <property type="entry name" value="PRK05322.1"/>
    <property type="match status" value="1"/>
</dbReference>
<dbReference type="PANTHER" id="PTHR10457:SF7">
    <property type="entry name" value="GALACTOKINASE-RELATED"/>
    <property type="match status" value="1"/>
</dbReference>
<dbReference type="PANTHER" id="PTHR10457">
    <property type="entry name" value="MEVALONATE KINASE/GALACTOKINASE"/>
    <property type="match status" value="1"/>
</dbReference>
<dbReference type="Pfam" id="PF10509">
    <property type="entry name" value="GalKase_gal_bdg"/>
    <property type="match status" value="1"/>
</dbReference>
<dbReference type="Pfam" id="PF08544">
    <property type="entry name" value="GHMP_kinases_C"/>
    <property type="match status" value="1"/>
</dbReference>
<dbReference type="Pfam" id="PF00288">
    <property type="entry name" value="GHMP_kinases_N"/>
    <property type="match status" value="1"/>
</dbReference>
<dbReference type="PIRSF" id="PIRSF000530">
    <property type="entry name" value="Galactokinase"/>
    <property type="match status" value="1"/>
</dbReference>
<dbReference type="PRINTS" id="PR00473">
    <property type="entry name" value="GALCTOKINASE"/>
</dbReference>
<dbReference type="PRINTS" id="PR00959">
    <property type="entry name" value="MEVGALKINASE"/>
</dbReference>
<dbReference type="SUPFAM" id="SSF55060">
    <property type="entry name" value="GHMP Kinase, C-terminal domain"/>
    <property type="match status" value="1"/>
</dbReference>
<dbReference type="SUPFAM" id="SSF54211">
    <property type="entry name" value="Ribosomal protein S5 domain 2-like"/>
    <property type="match status" value="1"/>
</dbReference>
<dbReference type="PROSITE" id="PS00627">
    <property type="entry name" value="GHMP_KINASES_ATP"/>
    <property type="match status" value="1"/>
</dbReference>
<name>GAL1_LEVBA</name>
<keyword id="KW-0067">ATP-binding</keyword>
<keyword id="KW-0119">Carbohydrate metabolism</keyword>
<keyword id="KW-0963">Cytoplasm</keyword>
<keyword id="KW-0299">Galactose metabolism</keyword>
<keyword id="KW-0418">Kinase</keyword>
<keyword id="KW-0460">Magnesium</keyword>
<keyword id="KW-0479">Metal-binding</keyword>
<keyword id="KW-0547">Nucleotide-binding</keyword>
<keyword id="KW-1185">Reference proteome</keyword>
<keyword id="KW-0808">Transferase</keyword>
<evidence type="ECO:0000255" key="1">
    <source>
        <dbReference type="HAMAP-Rule" id="MF_00246"/>
    </source>
</evidence>
<organism>
    <name type="scientific">Levilactobacillus brevis (strain ATCC 367 / BCRC 12310 / CIP 105137 / JCM 1170 / LMG 11437 / NCIMB 947 / NCTC 947)</name>
    <name type="common">Lactobacillus brevis</name>
    <dbReference type="NCBI Taxonomy" id="387344"/>
    <lineage>
        <taxon>Bacteria</taxon>
        <taxon>Bacillati</taxon>
        <taxon>Bacillota</taxon>
        <taxon>Bacilli</taxon>
        <taxon>Lactobacillales</taxon>
        <taxon>Lactobacillaceae</taxon>
        <taxon>Levilactobacillus</taxon>
    </lineage>
</organism>
<accession>Q03PA8</accession>